<comment type="alternative products">
    <event type="alternative splicing"/>
    <isoform>
        <id>Q6ZNQ3-1</id>
        <name>1</name>
        <sequence type="displayed"/>
    </isoform>
    <isoform>
        <id>Q6ZNQ3-2</id>
        <name>2</name>
        <sequence type="described" ref="VSP_033810"/>
    </isoform>
</comment>
<comment type="similarity">
    <text evidence="2">Belongs to the LRRC69 family.</text>
</comment>
<protein>
    <recommendedName>
        <fullName>Leucine-rich repeat-containing protein 69</fullName>
    </recommendedName>
</protein>
<organism>
    <name type="scientific">Homo sapiens</name>
    <name type="common">Human</name>
    <dbReference type="NCBI Taxonomy" id="9606"/>
    <lineage>
        <taxon>Eukaryota</taxon>
        <taxon>Metazoa</taxon>
        <taxon>Chordata</taxon>
        <taxon>Craniata</taxon>
        <taxon>Vertebrata</taxon>
        <taxon>Euteleostomi</taxon>
        <taxon>Mammalia</taxon>
        <taxon>Eutheria</taxon>
        <taxon>Euarchontoglires</taxon>
        <taxon>Primates</taxon>
        <taxon>Haplorrhini</taxon>
        <taxon>Catarrhini</taxon>
        <taxon>Hominidae</taxon>
        <taxon>Homo</taxon>
    </lineage>
</organism>
<reference key="1">
    <citation type="journal article" date="2004" name="Nat. Genet.">
        <title>Complete sequencing and characterization of 21,243 full-length human cDNAs.</title>
        <authorList>
            <person name="Ota T."/>
            <person name="Suzuki Y."/>
            <person name="Nishikawa T."/>
            <person name="Otsuki T."/>
            <person name="Sugiyama T."/>
            <person name="Irie R."/>
            <person name="Wakamatsu A."/>
            <person name="Hayashi K."/>
            <person name="Sato H."/>
            <person name="Nagai K."/>
            <person name="Kimura K."/>
            <person name="Makita H."/>
            <person name="Sekine M."/>
            <person name="Obayashi M."/>
            <person name="Nishi T."/>
            <person name="Shibahara T."/>
            <person name="Tanaka T."/>
            <person name="Ishii S."/>
            <person name="Yamamoto J."/>
            <person name="Saito K."/>
            <person name="Kawai Y."/>
            <person name="Isono Y."/>
            <person name="Nakamura Y."/>
            <person name="Nagahari K."/>
            <person name="Murakami K."/>
            <person name="Yasuda T."/>
            <person name="Iwayanagi T."/>
            <person name="Wagatsuma M."/>
            <person name="Shiratori A."/>
            <person name="Sudo H."/>
            <person name="Hosoiri T."/>
            <person name="Kaku Y."/>
            <person name="Kodaira H."/>
            <person name="Kondo H."/>
            <person name="Sugawara M."/>
            <person name="Takahashi M."/>
            <person name="Kanda K."/>
            <person name="Yokoi T."/>
            <person name="Furuya T."/>
            <person name="Kikkawa E."/>
            <person name="Omura Y."/>
            <person name="Abe K."/>
            <person name="Kamihara K."/>
            <person name="Katsuta N."/>
            <person name="Sato K."/>
            <person name="Tanikawa M."/>
            <person name="Yamazaki M."/>
            <person name="Ninomiya K."/>
            <person name="Ishibashi T."/>
            <person name="Yamashita H."/>
            <person name="Murakawa K."/>
            <person name="Fujimori K."/>
            <person name="Tanai H."/>
            <person name="Kimata M."/>
            <person name="Watanabe M."/>
            <person name="Hiraoka S."/>
            <person name="Chiba Y."/>
            <person name="Ishida S."/>
            <person name="Ono Y."/>
            <person name="Takiguchi S."/>
            <person name="Watanabe S."/>
            <person name="Yosida M."/>
            <person name="Hotuta T."/>
            <person name="Kusano J."/>
            <person name="Kanehori K."/>
            <person name="Takahashi-Fujii A."/>
            <person name="Hara H."/>
            <person name="Tanase T.-O."/>
            <person name="Nomura Y."/>
            <person name="Togiya S."/>
            <person name="Komai F."/>
            <person name="Hara R."/>
            <person name="Takeuchi K."/>
            <person name="Arita M."/>
            <person name="Imose N."/>
            <person name="Musashino K."/>
            <person name="Yuuki H."/>
            <person name="Oshima A."/>
            <person name="Sasaki N."/>
            <person name="Aotsuka S."/>
            <person name="Yoshikawa Y."/>
            <person name="Matsunawa H."/>
            <person name="Ichihara T."/>
            <person name="Shiohata N."/>
            <person name="Sano S."/>
            <person name="Moriya S."/>
            <person name="Momiyama H."/>
            <person name="Satoh N."/>
            <person name="Takami S."/>
            <person name="Terashima Y."/>
            <person name="Suzuki O."/>
            <person name="Nakagawa S."/>
            <person name="Senoh A."/>
            <person name="Mizoguchi H."/>
            <person name="Goto Y."/>
            <person name="Shimizu F."/>
            <person name="Wakebe H."/>
            <person name="Hishigaki H."/>
            <person name="Watanabe T."/>
            <person name="Sugiyama A."/>
            <person name="Takemoto M."/>
            <person name="Kawakami B."/>
            <person name="Yamazaki M."/>
            <person name="Watanabe K."/>
            <person name="Kumagai A."/>
            <person name="Itakura S."/>
            <person name="Fukuzumi Y."/>
            <person name="Fujimori Y."/>
            <person name="Komiyama M."/>
            <person name="Tashiro H."/>
            <person name="Tanigami A."/>
            <person name="Fujiwara T."/>
            <person name="Ono T."/>
            <person name="Yamada K."/>
            <person name="Fujii Y."/>
            <person name="Ozaki K."/>
            <person name="Hirao M."/>
            <person name="Ohmori Y."/>
            <person name="Kawabata A."/>
            <person name="Hikiji T."/>
            <person name="Kobatake N."/>
            <person name="Inagaki H."/>
            <person name="Ikema Y."/>
            <person name="Okamoto S."/>
            <person name="Okitani R."/>
            <person name="Kawakami T."/>
            <person name="Noguchi S."/>
            <person name="Itoh T."/>
            <person name="Shigeta K."/>
            <person name="Senba T."/>
            <person name="Matsumura K."/>
            <person name="Nakajima Y."/>
            <person name="Mizuno T."/>
            <person name="Morinaga M."/>
            <person name="Sasaki M."/>
            <person name="Togashi T."/>
            <person name="Oyama M."/>
            <person name="Hata H."/>
            <person name="Watanabe M."/>
            <person name="Komatsu T."/>
            <person name="Mizushima-Sugano J."/>
            <person name="Satoh T."/>
            <person name="Shirai Y."/>
            <person name="Takahashi Y."/>
            <person name="Nakagawa K."/>
            <person name="Okumura K."/>
            <person name="Nagase T."/>
            <person name="Nomura N."/>
            <person name="Kikuchi H."/>
            <person name="Masuho Y."/>
            <person name="Yamashita R."/>
            <person name="Nakai K."/>
            <person name="Yada T."/>
            <person name="Nakamura Y."/>
            <person name="Ohara O."/>
            <person name="Isogai T."/>
            <person name="Sugano S."/>
        </authorList>
    </citation>
    <scope>NUCLEOTIDE SEQUENCE [LARGE SCALE MRNA] (ISOFORM 2)</scope>
    <source>
        <tissue>Testis</tissue>
    </source>
</reference>
<reference key="2">
    <citation type="journal article" date="2006" name="Nature">
        <title>DNA sequence and analysis of human chromosome 8.</title>
        <authorList>
            <person name="Nusbaum C."/>
            <person name="Mikkelsen T.S."/>
            <person name="Zody M.C."/>
            <person name="Asakawa S."/>
            <person name="Taudien S."/>
            <person name="Garber M."/>
            <person name="Kodira C.D."/>
            <person name="Schueler M.G."/>
            <person name="Shimizu A."/>
            <person name="Whittaker C.A."/>
            <person name="Chang J.L."/>
            <person name="Cuomo C.A."/>
            <person name="Dewar K."/>
            <person name="FitzGerald M.G."/>
            <person name="Yang X."/>
            <person name="Allen N.R."/>
            <person name="Anderson S."/>
            <person name="Asakawa T."/>
            <person name="Blechschmidt K."/>
            <person name="Bloom T."/>
            <person name="Borowsky M.L."/>
            <person name="Butler J."/>
            <person name="Cook A."/>
            <person name="Corum B."/>
            <person name="DeArellano K."/>
            <person name="DeCaprio D."/>
            <person name="Dooley K.T."/>
            <person name="Dorris L. III"/>
            <person name="Engels R."/>
            <person name="Gloeckner G."/>
            <person name="Hafez N."/>
            <person name="Hagopian D.S."/>
            <person name="Hall J.L."/>
            <person name="Ishikawa S.K."/>
            <person name="Jaffe D.B."/>
            <person name="Kamat A."/>
            <person name="Kudoh J."/>
            <person name="Lehmann R."/>
            <person name="Lokitsang T."/>
            <person name="Macdonald P."/>
            <person name="Major J.E."/>
            <person name="Matthews C.D."/>
            <person name="Mauceli E."/>
            <person name="Menzel U."/>
            <person name="Mihalev A.H."/>
            <person name="Minoshima S."/>
            <person name="Murayama Y."/>
            <person name="Naylor J.W."/>
            <person name="Nicol R."/>
            <person name="Nguyen C."/>
            <person name="O'Leary S.B."/>
            <person name="O'Neill K."/>
            <person name="Parker S.C.J."/>
            <person name="Polley A."/>
            <person name="Raymond C.K."/>
            <person name="Reichwald K."/>
            <person name="Rodriguez J."/>
            <person name="Sasaki T."/>
            <person name="Schilhabel M."/>
            <person name="Siddiqui R."/>
            <person name="Smith C.L."/>
            <person name="Sneddon T.P."/>
            <person name="Talamas J.A."/>
            <person name="Tenzin P."/>
            <person name="Topham K."/>
            <person name="Venkataraman V."/>
            <person name="Wen G."/>
            <person name="Yamazaki S."/>
            <person name="Young S.K."/>
            <person name="Zeng Q."/>
            <person name="Zimmer A.R."/>
            <person name="Rosenthal A."/>
            <person name="Birren B.W."/>
            <person name="Platzer M."/>
            <person name="Shimizu N."/>
            <person name="Lander E.S."/>
        </authorList>
    </citation>
    <scope>NUCLEOTIDE SEQUENCE [LARGE SCALE GENOMIC DNA]</scope>
</reference>
<reference key="3">
    <citation type="submission" date="2005-07" db="EMBL/GenBank/DDBJ databases">
        <authorList>
            <person name="Mural R.J."/>
            <person name="Istrail S."/>
            <person name="Sutton G.G."/>
            <person name="Florea L."/>
            <person name="Halpern A.L."/>
            <person name="Mobarry C.M."/>
            <person name="Lippert R."/>
            <person name="Walenz B."/>
            <person name="Shatkay H."/>
            <person name="Dew I."/>
            <person name="Miller J.R."/>
            <person name="Flanigan M.J."/>
            <person name="Edwards N.J."/>
            <person name="Bolanos R."/>
            <person name="Fasulo D."/>
            <person name="Halldorsson B.V."/>
            <person name="Hannenhalli S."/>
            <person name="Turner R."/>
            <person name="Yooseph S."/>
            <person name="Lu F."/>
            <person name="Nusskern D.R."/>
            <person name="Shue B.C."/>
            <person name="Zheng X.H."/>
            <person name="Zhong F."/>
            <person name="Delcher A.L."/>
            <person name="Huson D.H."/>
            <person name="Kravitz S.A."/>
            <person name="Mouchard L."/>
            <person name="Reinert K."/>
            <person name="Remington K.A."/>
            <person name="Clark A.G."/>
            <person name="Waterman M.S."/>
            <person name="Eichler E.E."/>
            <person name="Adams M.D."/>
            <person name="Hunkapiller M.W."/>
            <person name="Myers E.W."/>
            <person name="Venter J.C."/>
        </authorList>
    </citation>
    <scope>NUCLEOTIDE SEQUENCE [LARGE SCALE GENOMIC DNA]</scope>
</reference>
<sequence length="347" mass="39592">MTERLLIKALSGGKNTKIITLNGKKMTKMPSALGKLPGLKTLVLQNNLIPKVCPELCNLTQLTTLNLGNNLLEEVPEEMKYLTSLKNLHLSGNRICRFAPGACDGLQNLILLNLNNNHLTQLPQEVSRLKSLTYMSINYNQLASIPRELCFLENLVELQLNYNQLICIPEEIKFLKKLQKLLLARNNIGVLPEELCDLKKLRILDIAGNIIQIFPSGFQDLKLREFYCEGNPLFLQQPVISTQQENVWSLQEITSRFVMNQLAENNPFLMDDIERYPQVRSMISQGKTCAICGQYFITVWLECVRFVPPPKDWKISKNLKLVPLQVLICSYKCFTQRDPNLFGIAQV</sequence>
<accession>Q6ZNQ3</accession>
<dbReference type="EMBL" id="AK130865">
    <property type="protein sequence ID" value="BAC85448.1"/>
    <property type="molecule type" value="mRNA"/>
</dbReference>
<dbReference type="EMBL" id="AC087439">
    <property type="status" value="NOT_ANNOTATED_CDS"/>
    <property type="molecule type" value="Genomic_DNA"/>
</dbReference>
<dbReference type="EMBL" id="AC104966">
    <property type="status" value="NOT_ANNOTATED_CDS"/>
    <property type="molecule type" value="Genomic_DNA"/>
</dbReference>
<dbReference type="EMBL" id="AC104967">
    <property type="status" value="NOT_ANNOTATED_CDS"/>
    <property type="molecule type" value="Genomic_DNA"/>
</dbReference>
<dbReference type="EMBL" id="CH471060">
    <property type="protein sequence ID" value="EAW91678.1"/>
    <property type="molecule type" value="Genomic_DNA"/>
</dbReference>
<dbReference type="CCDS" id="CCDS87619.1">
    <molecule id="Q6ZNQ3-2"/>
</dbReference>
<dbReference type="RefSeq" id="NP_001123362.1">
    <molecule id="Q6ZNQ3-1"/>
    <property type="nucleotide sequence ID" value="NM_001129890.2"/>
</dbReference>
<dbReference type="RefSeq" id="NP_001341399.1">
    <molecule id="Q6ZNQ3-2"/>
    <property type="nucleotide sequence ID" value="NM_001354470.2"/>
</dbReference>
<dbReference type="SMR" id="Q6ZNQ3"/>
<dbReference type="BioGRID" id="934878">
    <property type="interactions" value="1"/>
</dbReference>
<dbReference type="FunCoup" id="Q6ZNQ3">
    <property type="interactions" value="14"/>
</dbReference>
<dbReference type="IntAct" id="Q6ZNQ3">
    <property type="interactions" value="1"/>
</dbReference>
<dbReference type="iPTMnet" id="Q6ZNQ3"/>
<dbReference type="PhosphoSitePlus" id="Q6ZNQ3"/>
<dbReference type="BioMuta" id="LRRC69"/>
<dbReference type="DMDM" id="189037067"/>
<dbReference type="MassIVE" id="Q6ZNQ3"/>
<dbReference type="PaxDb" id="9606-ENSP00000400803"/>
<dbReference type="PeptideAtlas" id="Q6ZNQ3"/>
<dbReference type="Antibodypedia" id="63550">
    <property type="antibodies" value="67 antibodies from 15 providers"/>
</dbReference>
<dbReference type="DNASU" id="100130742"/>
<dbReference type="Ensembl" id="ENST00000343709.7">
    <molecule id="Q6ZNQ3-2"/>
    <property type="protein sequence ID" value="ENSP00000343221.3"/>
    <property type="gene ID" value="ENSG00000214954.9"/>
</dbReference>
<dbReference type="Ensembl" id="ENST00000448384.3">
    <molecule id="Q6ZNQ3-1"/>
    <property type="protein sequence ID" value="ENSP00000400803.2"/>
    <property type="gene ID" value="ENSG00000214954.9"/>
</dbReference>
<dbReference type="GeneID" id="100130742"/>
<dbReference type="KEGG" id="hsa:100130742"/>
<dbReference type="MANE-Select" id="ENST00000448384.3">
    <property type="protein sequence ID" value="ENSP00000400803.2"/>
    <property type="RefSeq nucleotide sequence ID" value="NM_001129890.2"/>
    <property type="RefSeq protein sequence ID" value="NP_001123362.1"/>
</dbReference>
<dbReference type="UCSC" id="uc003yev.2">
    <molecule id="Q6ZNQ3-1"/>
    <property type="organism name" value="human"/>
</dbReference>
<dbReference type="AGR" id="HGNC:34303"/>
<dbReference type="CTD" id="100130742"/>
<dbReference type="DisGeNET" id="100130742"/>
<dbReference type="GeneCards" id="LRRC69"/>
<dbReference type="HGNC" id="HGNC:34303">
    <property type="gene designation" value="LRRC69"/>
</dbReference>
<dbReference type="HPA" id="ENSG00000214954">
    <property type="expression patterns" value="Tissue enhanced (testis)"/>
</dbReference>
<dbReference type="neXtProt" id="NX_Q6ZNQ3"/>
<dbReference type="PharmGKB" id="PA162394619"/>
<dbReference type="VEuPathDB" id="HostDB:ENSG00000214954"/>
<dbReference type="eggNOG" id="KOG0619">
    <property type="taxonomic scope" value="Eukaryota"/>
</dbReference>
<dbReference type="GeneTree" id="ENSGT00940000164066"/>
<dbReference type="HOGENOM" id="CLU_101819_0_0_1"/>
<dbReference type="InParanoid" id="Q6ZNQ3"/>
<dbReference type="OMA" id="CFNKSGH"/>
<dbReference type="OrthoDB" id="660555at2759"/>
<dbReference type="PAN-GO" id="Q6ZNQ3">
    <property type="GO annotations" value="1 GO annotation based on evolutionary models"/>
</dbReference>
<dbReference type="PhylomeDB" id="Q6ZNQ3"/>
<dbReference type="TreeFam" id="TF327010"/>
<dbReference type="PathwayCommons" id="Q6ZNQ3"/>
<dbReference type="SignaLink" id="Q6ZNQ3"/>
<dbReference type="BioGRID-ORCS" id="100130742">
    <property type="hits" value="7 hits in 305 CRISPR screens"/>
</dbReference>
<dbReference type="ChiTaRS" id="LRRC69">
    <property type="organism name" value="human"/>
</dbReference>
<dbReference type="Pharos" id="Q6ZNQ3">
    <property type="development level" value="Tdark"/>
</dbReference>
<dbReference type="PRO" id="PR:Q6ZNQ3"/>
<dbReference type="Proteomes" id="UP000005640">
    <property type="component" value="Chromosome 8"/>
</dbReference>
<dbReference type="RNAct" id="Q6ZNQ3">
    <property type="molecule type" value="protein"/>
</dbReference>
<dbReference type="Bgee" id="ENSG00000214954">
    <property type="expression patterns" value="Expressed in primordial germ cell in gonad and 92 other cell types or tissues"/>
</dbReference>
<dbReference type="ExpressionAtlas" id="Q6ZNQ3">
    <property type="expression patterns" value="baseline and differential"/>
</dbReference>
<dbReference type="GO" id="GO:0035556">
    <property type="term" value="P:intracellular signal transduction"/>
    <property type="evidence" value="ECO:0000318"/>
    <property type="project" value="GO_Central"/>
</dbReference>
<dbReference type="FunFam" id="3.80.10.10:FF:000657">
    <property type="entry name" value="Leucine-rich repeat-containing protein 69"/>
    <property type="match status" value="1"/>
</dbReference>
<dbReference type="Gene3D" id="3.80.10.10">
    <property type="entry name" value="Ribonuclease Inhibitor"/>
    <property type="match status" value="2"/>
</dbReference>
<dbReference type="InterPro" id="IPR001611">
    <property type="entry name" value="Leu-rich_rpt"/>
</dbReference>
<dbReference type="InterPro" id="IPR003591">
    <property type="entry name" value="Leu-rich_rpt_typical-subtyp"/>
</dbReference>
<dbReference type="InterPro" id="IPR032675">
    <property type="entry name" value="LRR_dom_sf"/>
</dbReference>
<dbReference type="InterPro" id="IPR050216">
    <property type="entry name" value="LRR_domain-containing"/>
</dbReference>
<dbReference type="PANTHER" id="PTHR48051">
    <property type="match status" value="1"/>
</dbReference>
<dbReference type="PANTHER" id="PTHR48051:SF1">
    <property type="entry name" value="RAS SUPPRESSOR PROTEIN 1"/>
    <property type="match status" value="1"/>
</dbReference>
<dbReference type="Pfam" id="PF13855">
    <property type="entry name" value="LRR_8"/>
    <property type="match status" value="2"/>
</dbReference>
<dbReference type="SMART" id="SM00364">
    <property type="entry name" value="LRR_BAC"/>
    <property type="match status" value="5"/>
</dbReference>
<dbReference type="SMART" id="SM00369">
    <property type="entry name" value="LRR_TYP"/>
    <property type="match status" value="7"/>
</dbReference>
<dbReference type="SUPFAM" id="SSF52058">
    <property type="entry name" value="L domain-like"/>
    <property type="match status" value="1"/>
</dbReference>
<dbReference type="PROSITE" id="PS51450">
    <property type="entry name" value="LRR"/>
    <property type="match status" value="8"/>
</dbReference>
<keyword id="KW-0025">Alternative splicing</keyword>
<keyword id="KW-0433">Leucine-rich repeat</keyword>
<keyword id="KW-1185">Reference proteome</keyword>
<keyword id="KW-0677">Repeat</keyword>
<evidence type="ECO:0000303" key="1">
    <source>
    </source>
</evidence>
<evidence type="ECO:0000305" key="2"/>
<name>LRC69_HUMAN</name>
<proteinExistence type="evidence at transcript level"/>
<gene>
    <name type="primary">LRRC69</name>
</gene>
<feature type="chain" id="PRO_0000336072" description="Leucine-rich repeat-containing protein 69">
    <location>
        <begin position="1"/>
        <end position="347"/>
    </location>
</feature>
<feature type="repeat" description="LRR 1">
    <location>
        <begin position="38"/>
        <end position="60"/>
    </location>
</feature>
<feature type="repeat" description="LRR 2">
    <location>
        <begin position="61"/>
        <end position="82"/>
    </location>
</feature>
<feature type="repeat" description="LRR 3">
    <location>
        <begin position="84"/>
        <end position="105"/>
    </location>
</feature>
<feature type="repeat" description="LRR 4">
    <location>
        <begin position="108"/>
        <end position="129"/>
    </location>
</feature>
<feature type="repeat" description="LRR 5">
    <location>
        <begin position="131"/>
        <end position="153"/>
    </location>
</feature>
<feature type="repeat" description="LRR 6">
    <location>
        <begin position="154"/>
        <end position="175"/>
    </location>
</feature>
<feature type="repeat" description="LRR 7">
    <location>
        <begin position="177"/>
        <end position="199"/>
    </location>
</feature>
<feature type="repeat" description="LRR 8">
    <location>
        <begin position="200"/>
        <end position="222"/>
    </location>
</feature>
<feature type="splice variant" id="VSP_033810" description="In isoform 2." evidence="1">
    <location>
        <begin position="62"/>
        <end position="217"/>
    </location>
</feature>
<feature type="sequence variant" id="VAR_043481" description="In dbSNP:rs11785003.">
    <original>T</original>
    <variation>I</variation>
    <location>
        <position position="64"/>
    </location>
</feature>